<dbReference type="EC" id="2.1.1.196" evidence="1"/>
<dbReference type="EMBL" id="L77117">
    <property type="protein sequence ID" value="AAB98376.1"/>
    <property type="molecule type" value="Genomic_DNA"/>
</dbReference>
<dbReference type="PIR" id="G64348">
    <property type="entry name" value="G64348"/>
</dbReference>
<dbReference type="PDB" id="2YXD">
    <property type="method" value="X-ray"/>
    <property type="resolution" value="2.30 A"/>
    <property type="chains" value="A/B=1-183"/>
</dbReference>
<dbReference type="PDBsum" id="2YXD"/>
<dbReference type="SMR" id="Q57836"/>
<dbReference type="FunCoup" id="Q57836">
    <property type="interactions" value="110"/>
</dbReference>
<dbReference type="STRING" id="243232.MJ_0391"/>
<dbReference type="PaxDb" id="243232-MJ_0391"/>
<dbReference type="EnsemblBacteria" id="AAB98376">
    <property type="protein sequence ID" value="AAB98376"/>
    <property type="gene ID" value="MJ_0391"/>
</dbReference>
<dbReference type="KEGG" id="mja:MJ_0391"/>
<dbReference type="eggNOG" id="arCOG00977">
    <property type="taxonomic scope" value="Archaea"/>
</dbReference>
<dbReference type="HOGENOM" id="CLU_094143_0_0_2"/>
<dbReference type="InParanoid" id="Q57836"/>
<dbReference type="PhylomeDB" id="Q57836"/>
<dbReference type="UniPathway" id="UPA00148">
    <property type="reaction ID" value="UER00229"/>
</dbReference>
<dbReference type="EvolutionaryTrace" id="Q57836"/>
<dbReference type="Proteomes" id="UP000000805">
    <property type="component" value="Chromosome"/>
</dbReference>
<dbReference type="GO" id="GO:0043776">
    <property type="term" value="F:cobalt-precorrin-6B C5-methyltransferase activity"/>
    <property type="evidence" value="ECO:0007669"/>
    <property type="project" value="RHEA"/>
</dbReference>
<dbReference type="GO" id="GO:0008276">
    <property type="term" value="F:protein methyltransferase activity"/>
    <property type="evidence" value="ECO:0007669"/>
    <property type="project" value="InterPro"/>
</dbReference>
<dbReference type="GO" id="GO:0019251">
    <property type="term" value="P:anaerobic cobalamin biosynthetic process"/>
    <property type="evidence" value="ECO:0007669"/>
    <property type="project" value="UniProtKB-UniRule"/>
</dbReference>
<dbReference type="GO" id="GO:0032259">
    <property type="term" value="P:methylation"/>
    <property type="evidence" value="ECO:0007669"/>
    <property type="project" value="UniProtKB-KW"/>
</dbReference>
<dbReference type="CDD" id="cd02440">
    <property type="entry name" value="AdoMet_MTases"/>
    <property type="match status" value="1"/>
</dbReference>
<dbReference type="Gene3D" id="3.40.50.150">
    <property type="entry name" value="Vaccinia Virus protein VP39"/>
    <property type="match status" value="1"/>
</dbReference>
<dbReference type="HAMAP" id="MF_00786">
    <property type="entry name" value="CbiT"/>
    <property type="match status" value="1"/>
</dbReference>
<dbReference type="InterPro" id="IPR023475">
    <property type="entry name" value="CbiT"/>
</dbReference>
<dbReference type="InterPro" id="IPR014008">
    <property type="entry name" value="Cbl_synth_MTase_CbiT"/>
</dbReference>
<dbReference type="InterPro" id="IPR050714">
    <property type="entry name" value="Cobalamin_biosynth_MTase"/>
</dbReference>
<dbReference type="InterPro" id="IPR025714">
    <property type="entry name" value="Methyltranfer_dom"/>
</dbReference>
<dbReference type="InterPro" id="IPR029063">
    <property type="entry name" value="SAM-dependent_MTases_sf"/>
</dbReference>
<dbReference type="NCBIfam" id="TIGR02469">
    <property type="entry name" value="CbiT"/>
    <property type="match status" value="1"/>
</dbReference>
<dbReference type="PANTHER" id="PTHR43182">
    <property type="entry name" value="COBALT-PRECORRIN-6B C(15)-METHYLTRANSFERASE (DECARBOXYLATING)"/>
    <property type="match status" value="1"/>
</dbReference>
<dbReference type="PANTHER" id="PTHR43182:SF1">
    <property type="entry name" value="COBALT-PRECORRIN-7 C(5)-METHYLTRANSFERASE"/>
    <property type="match status" value="1"/>
</dbReference>
<dbReference type="Pfam" id="PF13847">
    <property type="entry name" value="Methyltransf_31"/>
    <property type="match status" value="1"/>
</dbReference>
<dbReference type="SUPFAM" id="SSF53335">
    <property type="entry name" value="S-adenosyl-L-methionine-dependent methyltransferases"/>
    <property type="match status" value="1"/>
</dbReference>
<accession>Q57836</accession>
<organism>
    <name type="scientific">Methanocaldococcus jannaschii (strain ATCC 43067 / DSM 2661 / JAL-1 / JCM 10045 / NBRC 100440)</name>
    <name type="common">Methanococcus jannaschii</name>
    <dbReference type="NCBI Taxonomy" id="243232"/>
    <lineage>
        <taxon>Archaea</taxon>
        <taxon>Methanobacteriati</taxon>
        <taxon>Methanobacteriota</taxon>
        <taxon>Methanomada group</taxon>
        <taxon>Methanococci</taxon>
        <taxon>Methanococcales</taxon>
        <taxon>Methanocaldococcaceae</taxon>
        <taxon>Methanocaldococcus</taxon>
    </lineage>
</organism>
<keyword id="KW-0002">3D-structure</keyword>
<keyword id="KW-0169">Cobalamin biosynthesis</keyword>
<keyword id="KW-0489">Methyltransferase</keyword>
<keyword id="KW-1185">Reference proteome</keyword>
<keyword id="KW-0949">S-adenosyl-L-methionine</keyword>
<keyword id="KW-0808">Transferase</keyword>
<reference key="1">
    <citation type="journal article" date="1996" name="Science">
        <title>Complete genome sequence of the methanogenic archaeon, Methanococcus jannaschii.</title>
        <authorList>
            <person name="Bult C.J."/>
            <person name="White O."/>
            <person name="Olsen G.J."/>
            <person name="Zhou L."/>
            <person name="Fleischmann R.D."/>
            <person name="Sutton G.G."/>
            <person name="Blake J.A."/>
            <person name="FitzGerald L.M."/>
            <person name="Clayton R.A."/>
            <person name="Gocayne J.D."/>
            <person name="Kerlavage A.R."/>
            <person name="Dougherty B.A."/>
            <person name="Tomb J.-F."/>
            <person name="Adams M.D."/>
            <person name="Reich C.I."/>
            <person name="Overbeek R."/>
            <person name="Kirkness E.F."/>
            <person name="Weinstock K.G."/>
            <person name="Merrick J.M."/>
            <person name="Glodek A."/>
            <person name="Scott J.L."/>
            <person name="Geoghagen N.S.M."/>
            <person name="Weidman J.F."/>
            <person name="Fuhrmann J.L."/>
            <person name="Nguyen D."/>
            <person name="Utterback T.R."/>
            <person name="Kelley J.M."/>
            <person name="Peterson J.D."/>
            <person name="Sadow P.W."/>
            <person name="Hanna M.C."/>
            <person name="Cotton M.D."/>
            <person name="Roberts K.M."/>
            <person name="Hurst M.A."/>
            <person name="Kaine B.P."/>
            <person name="Borodovsky M."/>
            <person name="Klenk H.-P."/>
            <person name="Fraser C.M."/>
            <person name="Smith H.O."/>
            <person name="Woese C.R."/>
            <person name="Venter J.C."/>
        </authorList>
    </citation>
    <scope>NUCLEOTIDE SEQUENCE [LARGE SCALE GENOMIC DNA]</scope>
    <source>
        <strain>ATCC 43067 / DSM 2661 / JAL-1 / JCM 10045 / NBRC 100440</strain>
    </source>
</reference>
<reference key="2">
    <citation type="journal article" date="2013" name="BMC Struct. Biol.">
        <title>Crystal structure of putative CbiT from Methanocaldococcus jannaschii: an intermediate enzyme activity in cobalamin (vitamin B12) biosynthesis.</title>
        <authorList>
            <person name="Padmanabhan B."/>
            <person name="Yokoyama S."/>
            <person name="Bessho Y."/>
        </authorList>
    </citation>
    <scope>X-RAY CRYSTALLOGRAPHY (2.3 ANGSTROMS)</scope>
</reference>
<sequence length="183" mass="20502">MKYMIPDEEFIRREGVPITKEEIRAVSIGKLNLNKDDVVVDVGCGSGGMTVEIAKRCKFVYAIDYLDGAIEVTKQNLAKFNIKNCQIIKGRAEDVLDKLEFNKAFIGGTKNIEKIIEILDKKKINHIVANTIVLENAAKIINEFESRGYNVDAVNVFISYAKKIPSGHMFLAKNPITIIKAVR</sequence>
<name>CBIT_METJA</name>
<comment type="function">
    <text evidence="1">Catalyzes the methylation of C-15 in cobalt-precorrin-6B followed by the decarboxylation of C-12 to form cobalt-precorrin-7.</text>
</comment>
<comment type="catalytic activity">
    <reaction evidence="1">
        <text>Co-precorrin-6B + S-adenosyl-L-methionine = Co-precorrin-7 + S-adenosyl-L-homocysteine + CO2</text>
        <dbReference type="Rhea" id="RHEA:36067"/>
        <dbReference type="ChEBI" id="CHEBI:16526"/>
        <dbReference type="ChEBI" id="CHEBI:57856"/>
        <dbReference type="ChEBI" id="CHEBI:59789"/>
        <dbReference type="ChEBI" id="CHEBI:70791"/>
        <dbReference type="ChEBI" id="CHEBI:72780"/>
        <dbReference type="EC" id="2.1.1.196"/>
    </reaction>
</comment>
<comment type="pathway">
    <text evidence="1">Cofactor biosynthesis; adenosylcobalamin biosynthesis; cob(II)yrinate a,c-diamide from sirohydrochlorin (anaerobic route): step 8/10.</text>
</comment>
<comment type="similarity">
    <text evidence="1">Belongs to the methyltransferase superfamily. Archaeal-type CbiT family.</text>
</comment>
<gene>
    <name evidence="1" type="primary">cbiT</name>
    <name type="ordered locus">MJ0391</name>
</gene>
<evidence type="ECO:0000255" key="1">
    <source>
        <dbReference type="HAMAP-Rule" id="MF_00786"/>
    </source>
</evidence>
<evidence type="ECO:0007829" key="2">
    <source>
        <dbReference type="PDB" id="2YXD"/>
    </source>
</evidence>
<feature type="chain" id="PRO_0000134938" description="Probable cobalt-precorrin-6B C(15)-methyltransferase (decarboxylating)">
    <location>
        <begin position="1"/>
        <end position="183"/>
    </location>
</feature>
<feature type="binding site" evidence="1">
    <location>
        <position position="19"/>
    </location>
    <ligand>
        <name>S-adenosyl-L-methionine</name>
        <dbReference type="ChEBI" id="CHEBI:59789"/>
    </ligand>
</feature>
<feature type="binding site" evidence="1">
    <location>
        <begin position="43"/>
        <end position="47"/>
    </location>
    <ligand>
        <name>S-adenosyl-L-methionine</name>
        <dbReference type="ChEBI" id="CHEBI:59789"/>
    </ligand>
</feature>
<feature type="binding site" evidence="1">
    <location>
        <position position="64"/>
    </location>
    <ligand>
        <name>S-adenosyl-L-methionine</name>
        <dbReference type="ChEBI" id="CHEBI:59789"/>
    </ligand>
</feature>
<feature type="binding site" evidence="1">
    <location>
        <position position="92"/>
    </location>
    <ligand>
        <name>S-adenosyl-L-methionine</name>
        <dbReference type="ChEBI" id="CHEBI:59789"/>
    </ligand>
</feature>
<feature type="helix" evidence="2">
    <location>
        <begin position="21"/>
        <end position="31"/>
    </location>
</feature>
<feature type="strand" evidence="2">
    <location>
        <begin position="38"/>
        <end position="43"/>
    </location>
</feature>
<feature type="helix" evidence="2">
    <location>
        <begin position="48"/>
        <end position="54"/>
    </location>
</feature>
<feature type="strand" evidence="2">
    <location>
        <begin position="57"/>
        <end position="64"/>
    </location>
</feature>
<feature type="helix" evidence="2">
    <location>
        <begin position="67"/>
        <end position="79"/>
    </location>
</feature>
<feature type="strand" evidence="2">
    <location>
        <begin position="84"/>
        <end position="90"/>
    </location>
</feature>
<feature type="helix" evidence="2">
    <location>
        <begin position="92"/>
        <end position="95"/>
    </location>
</feature>
<feature type="helix" evidence="2">
    <location>
        <begin position="96"/>
        <end position="98"/>
    </location>
</feature>
<feature type="strand" evidence="2">
    <location>
        <begin position="102"/>
        <end position="106"/>
    </location>
</feature>
<feature type="helix" evidence="2">
    <location>
        <begin position="112"/>
        <end position="121"/>
    </location>
</feature>
<feature type="strand" evidence="2">
    <location>
        <begin position="126"/>
        <end position="132"/>
    </location>
</feature>
<feature type="helix" evidence="2">
    <location>
        <begin position="134"/>
        <end position="146"/>
    </location>
</feature>
<feature type="strand" evidence="2">
    <location>
        <begin position="150"/>
        <end position="164"/>
    </location>
</feature>
<feature type="strand" evidence="2">
    <location>
        <begin position="167"/>
        <end position="172"/>
    </location>
</feature>
<feature type="strand" evidence="2">
    <location>
        <begin position="176"/>
        <end position="182"/>
    </location>
</feature>
<proteinExistence type="evidence at protein level"/>
<protein>
    <recommendedName>
        <fullName evidence="1">Probable cobalt-precorrin-6B C(15)-methyltransferase (decarboxylating)</fullName>
        <ecNumber evidence="1">2.1.1.196</ecNumber>
    </recommendedName>
</protein>